<gene>
    <name evidence="1" type="primary">rpmI</name>
    <name type="ordered locus">BAbS19_I19850</name>
</gene>
<sequence length="66" mass="7186">MPKMKTKSAAKKRFKITGTGKVKAAAAGKRHGMIKRSNKFIRDARGTMVLADADAKIVKQFLPNGL</sequence>
<protein>
    <recommendedName>
        <fullName evidence="1">Large ribosomal subunit protein bL35</fullName>
    </recommendedName>
    <alternativeName>
        <fullName evidence="2">50S ribosomal protein L35</fullName>
    </alternativeName>
</protein>
<name>RL35_BRUA1</name>
<evidence type="ECO:0000255" key="1">
    <source>
        <dbReference type="HAMAP-Rule" id="MF_00514"/>
    </source>
</evidence>
<evidence type="ECO:0000305" key="2"/>
<accession>B2S9B5</accession>
<keyword id="KW-0687">Ribonucleoprotein</keyword>
<keyword id="KW-0689">Ribosomal protein</keyword>
<dbReference type="EMBL" id="CP000887">
    <property type="protein sequence ID" value="ACD73467.1"/>
    <property type="molecule type" value="Genomic_DNA"/>
</dbReference>
<dbReference type="RefSeq" id="WP_002965184.1">
    <property type="nucleotide sequence ID" value="NC_010742.1"/>
</dbReference>
<dbReference type="SMR" id="B2S9B5"/>
<dbReference type="GeneID" id="93017574"/>
<dbReference type="KEGG" id="bmc:BAbS19_I19850"/>
<dbReference type="HOGENOM" id="CLU_169643_2_1_5"/>
<dbReference type="Proteomes" id="UP000002565">
    <property type="component" value="Chromosome 1"/>
</dbReference>
<dbReference type="GO" id="GO:0022625">
    <property type="term" value="C:cytosolic large ribosomal subunit"/>
    <property type="evidence" value="ECO:0007669"/>
    <property type="project" value="TreeGrafter"/>
</dbReference>
<dbReference type="GO" id="GO:0003735">
    <property type="term" value="F:structural constituent of ribosome"/>
    <property type="evidence" value="ECO:0007669"/>
    <property type="project" value="InterPro"/>
</dbReference>
<dbReference type="GO" id="GO:0006412">
    <property type="term" value="P:translation"/>
    <property type="evidence" value="ECO:0007669"/>
    <property type="project" value="UniProtKB-UniRule"/>
</dbReference>
<dbReference type="FunFam" id="4.10.410.60:FF:000001">
    <property type="entry name" value="50S ribosomal protein L35"/>
    <property type="match status" value="1"/>
</dbReference>
<dbReference type="Gene3D" id="4.10.410.60">
    <property type="match status" value="1"/>
</dbReference>
<dbReference type="HAMAP" id="MF_00514">
    <property type="entry name" value="Ribosomal_bL35"/>
    <property type="match status" value="1"/>
</dbReference>
<dbReference type="InterPro" id="IPR001706">
    <property type="entry name" value="Ribosomal_bL35"/>
</dbReference>
<dbReference type="InterPro" id="IPR021137">
    <property type="entry name" value="Ribosomal_bL35-like"/>
</dbReference>
<dbReference type="InterPro" id="IPR018265">
    <property type="entry name" value="Ribosomal_bL35_CS"/>
</dbReference>
<dbReference type="InterPro" id="IPR037229">
    <property type="entry name" value="Ribosomal_bL35_sf"/>
</dbReference>
<dbReference type="NCBIfam" id="TIGR00001">
    <property type="entry name" value="rpmI_bact"/>
    <property type="match status" value="1"/>
</dbReference>
<dbReference type="PANTHER" id="PTHR33343">
    <property type="entry name" value="54S RIBOSOMAL PROTEIN BL35M"/>
    <property type="match status" value="1"/>
</dbReference>
<dbReference type="PANTHER" id="PTHR33343:SF1">
    <property type="entry name" value="LARGE RIBOSOMAL SUBUNIT PROTEIN BL35M"/>
    <property type="match status" value="1"/>
</dbReference>
<dbReference type="Pfam" id="PF01632">
    <property type="entry name" value="Ribosomal_L35p"/>
    <property type="match status" value="1"/>
</dbReference>
<dbReference type="PRINTS" id="PR00064">
    <property type="entry name" value="RIBOSOMALL35"/>
</dbReference>
<dbReference type="SUPFAM" id="SSF143034">
    <property type="entry name" value="L35p-like"/>
    <property type="match status" value="1"/>
</dbReference>
<dbReference type="PROSITE" id="PS00936">
    <property type="entry name" value="RIBOSOMAL_L35"/>
    <property type="match status" value="1"/>
</dbReference>
<feature type="chain" id="PRO_1000127316" description="Large ribosomal subunit protein bL35">
    <location>
        <begin position="1"/>
        <end position="66"/>
    </location>
</feature>
<comment type="similarity">
    <text evidence="1">Belongs to the bacterial ribosomal protein bL35 family.</text>
</comment>
<reference key="1">
    <citation type="journal article" date="2008" name="PLoS ONE">
        <title>Genome sequence of Brucella abortus vaccine strain S19 compared to virulent strains yields candidate virulence genes.</title>
        <authorList>
            <person name="Crasta O.R."/>
            <person name="Folkerts O."/>
            <person name="Fei Z."/>
            <person name="Mane S.P."/>
            <person name="Evans C."/>
            <person name="Martino-Catt S."/>
            <person name="Bricker B."/>
            <person name="Yu G."/>
            <person name="Du L."/>
            <person name="Sobral B.W."/>
        </authorList>
    </citation>
    <scope>NUCLEOTIDE SEQUENCE [LARGE SCALE GENOMIC DNA]</scope>
    <source>
        <strain>S19</strain>
    </source>
</reference>
<proteinExistence type="inferred from homology"/>
<organism>
    <name type="scientific">Brucella abortus (strain S19)</name>
    <dbReference type="NCBI Taxonomy" id="430066"/>
    <lineage>
        <taxon>Bacteria</taxon>
        <taxon>Pseudomonadati</taxon>
        <taxon>Pseudomonadota</taxon>
        <taxon>Alphaproteobacteria</taxon>
        <taxon>Hyphomicrobiales</taxon>
        <taxon>Brucellaceae</taxon>
        <taxon>Brucella/Ochrobactrum group</taxon>
        <taxon>Brucella</taxon>
    </lineage>
</organism>